<gene>
    <name evidence="1" type="primary">coaD</name>
    <name type="ordered locus">BU583</name>
</gene>
<feature type="chain" id="PRO_0000156184" description="Phosphopantetheine adenylyltransferase">
    <location>
        <begin position="1"/>
        <end position="165"/>
    </location>
</feature>
<feature type="binding site" evidence="1">
    <location>
        <begin position="10"/>
        <end position="11"/>
    </location>
    <ligand>
        <name>ATP</name>
        <dbReference type="ChEBI" id="CHEBI:30616"/>
    </ligand>
</feature>
<feature type="binding site" evidence="1">
    <location>
        <position position="10"/>
    </location>
    <ligand>
        <name>substrate</name>
    </ligand>
</feature>
<feature type="binding site" evidence="1">
    <location>
        <position position="18"/>
    </location>
    <ligand>
        <name>ATP</name>
        <dbReference type="ChEBI" id="CHEBI:30616"/>
    </ligand>
</feature>
<feature type="binding site" evidence="1">
    <location>
        <position position="42"/>
    </location>
    <ligand>
        <name>substrate</name>
    </ligand>
</feature>
<feature type="binding site" evidence="1">
    <location>
        <position position="75"/>
    </location>
    <ligand>
        <name>substrate</name>
    </ligand>
</feature>
<feature type="binding site" evidence="1">
    <location>
        <position position="89"/>
    </location>
    <ligand>
        <name>substrate</name>
    </ligand>
</feature>
<feature type="binding site" evidence="1">
    <location>
        <begin position="90"/>
        <end position="92"/>
    </location>
    <ligand>
        <name>ATP</name>
        <dbReference type="ChEBI" id="CHEBI:30616"/>
    </ligand>
</feature>
<feature type="binding site" evidence="1">
    <location>
        <position position="100"/>
    </location>
    <ligand>
        <name>ATP</name>
        <dbReference type="ChEBI" id="CHEBI:30616"/>
    </ligand>
</feature>
<feature type="binding site" evidence="1">
    <location>
        <begin position="125"/>
        <end position="131"/>
    </location>
    <ligand>
        <name>ATP</name>
        <dbReference type="ChEBI" id="CHEBI:30616"/>
    </ligand>
</feature>
<feature type="site" description="Transition state stabilizer" evidence="1">
    <location>
        <position position="18"/>
    </location>
</feature>
<protein>
    <recommendedName>
        <fullName evidence="1">Phosphopantetheine adenylyltransferase</fullName>
        <ecNumber evidence="1">2.7.7.3</ecNumber>
    </recommendedName>
    <alternativeName>
        <fullName evidence="1">Dephospho-CoA pyrophosphorylase</fullName>
    </alternativeName>
    <alternativeName>
        <fullName evidence="1">Pantetheine-phosphate adenylyltransferase</fullName>
        <shortName evidence="1">PPAT</shortName>
    </alternativeName>
</protein>
<keyword id="KW-0067">ATP-binding</keyword>
<keyword id="KW-0173">Coenzyme A biosynthesis</keyword>
<keyword id="KW-0963">Cytoplasm</keyword>
<keyword id="KW-0460">Magnesium</keyword>
<keyword id="KW-0547">Nucleotide-binding</keyword>
<keyword id="KW-0548">Nucleotidyltransferase</keyword>
<keyword id="KW-1185">Reference proteome</keyword>
<keyword id="KW-0808">Transferase</keyword>
<comment type="function">
    <text evidence="1">Reversibly transfers an adenylyl group from ATP to 4'-phosphopantetheine, yielding dephospho-CoA (dPCoA) and pyrophosphate.</text>
</comment>
<comment type="catalytic activity">
    <reaction evidence="1">
        <text>(R)-4'-phosphopantetheine + ATP + H(+) = 3'-dephospho-CoA + diphosphate</text>
        <dbReference type="Rhea" id="RHEA:19801"/>
        <dbReference type="ChEBI" id="CHEBI:15378"/>
        <dbReference type="ChEBI" id="CHEBI:30616"/>
        <dbReference type="ChEBI" id="CHEBI:33019"/>
        <dbReference type="ChEBI" id="CHEBI:57328"/>
        <dbReference type="ChEBI" id="CHEBI:61723"/>
        <dbReference type="EC" id="2.7.7.3"/>
    </reaction>
</comment>
<comment type="cofactor">
    <cofactor evidence="1">
        <name>Mg(2+)</name>
        <dbReference type="ChEBI" id="CHEBI:18420"/>
    </cofactor>
</comment>
<comment type="pathway">
    <text evidence="1">Cofactor biosynthesis; coenzyme A biosynthesis; CoA from (R)-pantothenate: step 4/5.</text>
</comment>
<comment type="subunit">
    <text evidence="1">Homohexamer.</text>
</comment>
<comment type="subcellular location">
    <subcellularLocation>
        <location evidence="1">Cytoplasm</location>
    </subcellularLocation>
</comment>
<comment type="similarity">
    <text evidence="1">Belongs to the bacterial CoaD family.</text>
</comment>
<dbReference type="EC" id="2.7.7.3" evidence="1"/>
<dbReference type="EMBL" id="BA000003">
    <property type="protein sequence ID" value="BAB13272.1"/>
    <property type="molecule type" value="Genomic_DNA"/>
</dbReference>
<dbReference type="RefSeq" id="NP_240386.1">
    <property type="nucleotide sequence ID" value="NC_002528.1"/>
</dbReference>
<dbReference type="RefSeq" id="WP_010896174.1">
    <property type="nucleotide sequence ID" value="NZ_AP036055.1"/>
</dbReference>
<dbReference type="SMR" id="P57643"/>
<dbReference type="STRING" id="563178.BUAP5A_576"/>
<dbReference type="EnsemblBacteria" id="BAB13272">
    <property type="protein sequence ID" value="BAB13272"/>
    <property type="gene ID" value="BAB13272"/>
</dbReference>
<dbReference type="KEGG" id="buc:BU583"/>
<dbReference type="PATRIC" id="fig|107806.10.peg.588"/>
<dbReference type="eggNOG" id="COG0669">
    <property type="taxonomic scope" value="Bacteria"/>
</dbReference>
<dbReference type="HOGENOM" id="CLU_100149_0_1_6"/>
<dbReference type="UniPathway" id="UPA00241">
    <property type="reaction ID" value="UER00355"/>
</dbReference>
<dbReference type="Proteomes" id="UP000001806">
    <property type="component" value="Chromosome"/>
</dbReference>
<dbReference type="GO" id="GO:0005737">
    <property type="term" value="C:cytoplasm"/>
    <property type="evidence" value="ECO:0007669"/>
    <property type="project" value="UniProtKB-SubCell"/>
</dbReference>
<dbReference type="GO" id="GO:0005524">
    <property type="term" value="F:ATP binding"/>
    <property type="evidence" value="ECO:0007669"/>
    <property type="project" value="UniProtKB-KW"/>
</dbReference>
<dbReference type="GO" id="GO:0004595">
    <property type="term" value="F:pantetheine-phosphate adenylyltransferase activity"/>
    <property type="evidence" value="ECO:0007669"/>
    <property type="project" value="UniProtKB-UniRule"/>
</dbReference>
<dbReference type="GO" id="GO:0015937">
    <property type="term" value="P:coenzyme A biosynthetic process"/>
    <property type="evidence" value="ECO:0007669"/>
    <property type="project" value="UniProtKB-UniRule"/>
</dbReference>
<dbReference type="CDD" id="cd02163">
    <property type="entry name" value="PPAT"/>
    <property type="match status" value="1"/>
</dbReference>
<dbReference type="Gene3D" id="3.40.50.620">
    <property type="entry name" value="HUPs"/>
    <property type="match status" value="1"/>
</dbReference>
<dbReference type="HAMAP" id="MF_00151">
    <property type="entry name" value="PPAT_bact"/>
    <property type="match status" value="1"/>
</dbReference>
<dbReference type="InterPro" id="IPR004821">
    <property type="entry name" value="Cyt_trans-like"/>
</dbReference>
<dbReference type="InterPro" id="IPR001980">
    <property type="entry name" value="PPAT"/>
</dbReference>
<dbReference type="InterPro" id="IPR014729">
    <property type="entry name" value="Rossmann-like_a/b/a_fold"/>
</dbReference>
<dbReference type="NCBIfam" id="TIGR01510">
    <property type="entry name" value="coaD_prev_kdtB"/>
    <property type="match status" value="1"/>
</dbReference>
<dbReference type="NCBIfam" id="TIGR00125">
    <property type="entry name" value="cyt_tran_rel"/>
    <property type="match status" value="1"/>
</dbReference>
<dbReference type="PANTHER" id="PTHR21342">
    <property type="entry name" value="PHOSPHOPANTETHEINE ADENYLYLTRANSFERASE"/>
    <property type="match status" value="1"/>
</dbReference>
<dbReference type="PANTHER" id="PTHR21342:SF1">
    <property type="entry name" value="PHOSPHOPANTETHEINE ADENYLYLTRANSFERASE"/>
    <property type="match status" value="1"/>
</dbReference>
<dbReference type="Pfam" id="PF01467">
    <property type="entry name" value="CTP_transf_like"/>
    <property type="match status" value="1"/>
</dbReference>
<dbReference type="PRINTS" id="PR01020">
    <property type="entry name" value="LPSBIOSNTHSS"/>
</dbReference>
<dbReference type="SUPFAM" id="SSF52374">
    <property type="entry name" value="Nucleotidylyl transferase"/>
    <property type="match status" value="1"/>
</dbReference>
<name>COAD_BUCAI</name>
<sequence length="165" mass="18847">MNKTAIYPGTFDPITYGHLDIITRATKIFDSITIAISNNFTKKPIFNLKERIELTRKVTLHLKNVKKILGFNDLLANLAKKEKANILIRGVRTIFDFDYEIKLAAINKQIYPDLDSIFLLSSKEVSFISSSFVKEIAKYKGDIKPYLPKEAHSALLRKLNNDSIK</sequence>
<proteinExistence type="inferred from homology"/>
<accession>P57643</accession>
<evidence type="ECO:0000255" key="1">
    <source>
        <dbReference type="HAMAP-Rule" id="MF_00151"/>
    </source>
</evidence>
<reference key="1">
    <citation type="journal article" date="2000" name="Nature">
        <title>Genome sequence of the endocellular bacterial symbiont of aphids Buchnera sp. APS.</title>
        <authorList>
            <person name="Shigenobu S."/>
            <person name="Watanabe H."/>
            <person name="Hattori M."/>
            <person name="Sakaki Y."/>
            <person name="Ishikawa H."/>
        </authorList>
    </citation>
    <scope>NUCLEOTIDE SEQUENCE [LARGE SCALE GENOMIC DNA]</scope>
    <source>
        <strain>APS</strain>
    </source>
</reference>
<organism>
    <name type="scientific">Buchnera aphidicola subsp. Acyrthosiphon pisum (strain APS)</name>
    <name type="common">Acyrthosiphon pisum symbiotic bacterium</name>
    <dbReference type="NCBI Taxonomy" id="107806"/>
    <lineage>
        <taxon>Bacteria</taxon>
        <taxon>Pseudomonadati</taxon>
        <taxon>Pseudomonadota</taxon>
        <taxon>Gammaproteobacteria</taxon>
        <taxon>Enterobacterales</taxon>
        <taxon>Erwiniaceae</taxon>
        <taxon>Buchnera</taxon>
    </lineage>
</organism>